<proteinExistence type="inferred from homology"/>
<accession>Q95NC5</accession>
<name>CCR5_SYMSY</name>
<sequence>MDYQVSSPTYDIDYYTSEPCQKINVKQIAARLLPPLYSLVFIFGFVGNMLVILILINCKRLKSMTDIYLLNLAISDLFFLLTVPFWAHYAAAQWDFGNTMCQLLTGLYFIGFFSGIFFIILLTIDRYLAIVHAVFALKARTVTFGVVTSVITWVVAVFASLPGIIFTRSQKEGLHYTCSSHFPYSQYQFWKNFQTLKIVILGLVLPLLVMVICYSGILKTLLRCRNEKKRHRAVRLIFTIMIVYFLFWAPYNIVLLLNTFQEFFGLNNCSSSNRLDQAMQVTETLGMTHCCINPIIYAFVGEKFRNYLLVFFQKHIAKHFCKCCSIFQQEAPERASSVYTRSTGEQEISVGL</sequence>
<feature type="chain" id="PRO_0000069260" description="C-C chemokine receptor type 5">
    <location>
        <begin position="1"/>
        <end position="352"/>
    </location>
</feature>
<feature type="topological domain" description="Extracellular" evidence="3">
    <location>
        <begin position="1"/>
        <end position="30"/>
    </location>
</feature>
<feature type="transmembrane region" description="Helical; Name=1" evidence="3">
    <location>
        <begin position="31"/>
        <end position="58"/>
    </location>
</feature>
<feature type="topological domain" description="Cytoplasmic" evidence="3">
    <location>
        <begin position="59"/>
        <end position="68"/>
    </location>
</feature>
<feature type="transmembrane region" description="Helical; Name=2" evidence="3">
    <location>
        <begin position="69"/>
        <end position="89"/>
    </location>
</feature>
<feature type="topological domain" description="Extracellular" evidence="3">
    <location>
        <begin position="90"/>
        <end position="102"/>
    </location>
</feature>
<feature type="transmembrane region" description="Helical; Name=3" evidence="3">
    <location>
        <begin position="103"/>
        <end position="124"/>
    </location>
</feature>
<feature type="topological domain" description="Cytoplasmic" evidence="3">
    <location>
        <begin position="125"/>
        <end position="141"/>
    </location>
</feature>
<feature type="transmembrane region" description="Helical; Name=4" evidence="3">
    <location>
        <begin position="142"/>
        <end position="166"/>
    </location>
</feature>
<feature type="topological domain" description="Extracellular" evidence="3">
    <location>
        <begin position="167"/>
        <end position="198"/>
    </location>
</feature>
<feature type="transmembrane region" description="Helical; Name=5" evidence="3">
    <location>
        <begin position="199"/>
        <end position="218"/>
    </location>
</feature>
<feature type="topological domain" description="Cytoplasmic" evidence="3">
    <location>
        <begin position="219"/>
        <end position="235"/>
    </location>
</feature>
<feature type="transmembrane region" description="Helical; Name=6" evidence="3">
    <location>
        <begin position="236"/>
        <end position="260"/>
    </location>
</feature>
<feature type="topological domain" description="Extracellular" evidence="3">
    <location>
        <begin position="261"/>
        <end position="277"/>
    </location>
</feature>
<feature type="transmembrane region" description="Helical; Name=7" evidence="3">
    <location>
        <begin position="278"/>
        <end position="301"/>
    </location>
</feature>
<feature type="topological domain" description="Cytoplasmic" evidence="3">
    <location>
        <begin position="302"/>
        <end position="352"/>
    </location>
</feature>
<feature type="modified residue" description="Sulfotyrosine" evidence="1">
    <location>
        <position position="3"/>
    </location>
</feature>
<feature type="modified residue" description="Sulfotyrosine" evidence="3">
    <location>
        <position position="10"/>
    </location>
</feature>
<feature type="modified residue" description="Sulfotyrosine" evidence="3">
    <location>
        <position position="14"/>
    </location>
</feature>
<feature type="modified residue" description="Sulfotyrosine" evidence="3">
    <location>
        <position position="15"/>
    </location>
</feature>
<feature type="modified residue" description="Phosphoserine; by BARK1" evidence="1">
    <location>
        <position position="336"/>
    </location>
</feature>
<feature type="modified residue" description="Phosphoserine; by BARK1" evidence="1">
    <location>
        <position position="337"/>
    </location>
</feature>
<feature type="modified residue" description="Phosphoserine; by BARK1" evidence="1">
    <location>
        <position position="342"/>
    </location>
</feature>
<feature type="modified residue" description="Phosphoserine; by BARK1" evidence="1">
    <location>
        <position position="349"/>
    </location>
</feature>
<feature type="lipid moiety-binding region" description="S-palmitoyl cysteine" evidence="1">
    <location>
        <position position="321"/>
    </location>
</feature>
<feature type="lipid moiety-binding region" description="S-palmitoyl cysteine" evidence="1">
    <location>
        <position position="323"/>
    </location>
</feature>
<feature type="lipid moiety-binding region" description="S-palmitoyl cysteine" evidence="1">
    <location>
        <position position="324"/>
    </location>
</feature>
<feature type="glycosylation site" description="O-linked (GalNAc...) serine" evidence="1">
    <location>
        <position position="6"/>
    </location>
</feature>
<feature type="glycosylation site" description="O-linked (GalNAc...) serine" evidence="1">
    <location>
        <position position="7"/>
    </location>
</feature>
<feature type="disulfide bond" evidence="1">
    <location>
        <begin position="20"/>
        <end position="269"/>
    </location>
</feature>
<feature type="disulfide bond" evidence="4">
    <location>
        <begin position="101"/>
        <end position="178"/>
    </location>
</feature>
<evidence type="ECO:0000250" key="1">
    <source>
        <dbReference type="UniProtKB" id="P51681"/>
    </source>
</evidence>
<evidence type="ECO:0000250" key="2">
    <source>
        <dbReference type="UniProtKB" id="Q9XT76"/>
    </source>
</evidence>
<evidence type="ECO:0000255" key="3"/>
<evidence type="ECO:0000255" key="4">
    <source>
        <dbReference type="PROSITE-ProRule" id="PRU00521"/>
    </source>
</evidence>
<reference key="1">
    <citation type="journal article" date="1999" name="Mol. Biol. Evol.">
        <title>Sequence evolution of the CCR5 chemokine receptor gene in primates.</title>
        <authorList>
            <person name="Zhang Y.-W."/>
            <person name="Ryder O.A."/>
            <person name="Zhang Y.-P."/>
        </authorList>
    </citation>
    <scope>NUCLEOTIDE SEQUENCE [GENOMIC DNA]</scope>
</reference>
<comment type="function">
    <text evidence="1">Receptor for a number of inflammatory CC-chemokines including CCL3/MIP-1-alpha, CCL4/MIP-1-beta and RANTES and subsequently transduces a signal by increasing the intracellular calcium ion level. May play a role in the control of granulocytic lineage proliferation or differentiation. Participates in T-lymphocyte migration to the infection site by acting as a chemotactic receptor.</text>
</comment>
<comment type="subunit">
    <text evidence="1">Interacts with PRAF2. Efficient ligand binding to CCL3/MIP-1alpha and CCL4/MIP-1beta requires sulfation, O-glycosylation and sialic acid modifications. Glycosylation on Ser-6 is required for efficient binding of CCL4. Interacts with GRK2. Interacts with ARRB1 and ARRB2. Interacts with CNIH4. Interacts with S100A4; this interaction stimulates T-lymphocyte chemotaxis.</text>
</comment>
<comment type="subcellular location">
    <subcellularLocation>
        <location evidence="2">Cell membrane</location>
        <topology evidence="2">Multi-pass membrane protein</topology>
    </subcellularLocation>
</comment>
<comment type="PTM">
    <text evidence="1">Sulfated on at least 2 of the N-terminal tyrosines. Sulfation is required for efficient binding of the chemokines, CCL3 and CCL4 (By similarity).</text>
</comment>
<comment type="PTM">
    <text evidence="1">Palmitoylation in the C-terminal is important for cell surface expression.</text>
</comment>
<comment type="PTM">
    <text evidence="1">Phosphorylation on serine residues in the C-terminal is stimulated by binding CC chemokines especially by APO-RANTES.</text>
</comment>
<comment type="PTM">
    <text evidence="1">O-glycosylated, but not N-glycosylated. Ser-6 appears to be the major site even if Ser-7 may be also O-glycosylated. Also sialylated glycans present which contribute to chemokine binding. Thr-16 and Ser-17 may also be glycosylated and, if so, with small moieties such as a T-antigen.</text>
</comment>
<comment type="similarity">
    <text evidence="4">Belongs to the G-protein coupled receptor 1 family.</text>
</comment>
<keyword id="KW-1003">Cell membrane</keyword>
<keyword id="KW-1015">Disulfide bond</keyword>
<keyword id="KW-0297">G-protein coupled receptor</keyword>
<keyword id="KW-0325">Glycoprotein</keyword>
<keyword id="KW-0449">Lipoprotein</keyword>
<keyword id="KW-0472">Membrane</keyword>
<keyword id="KW-0564">Palmitate</keyword>
<keyword id="KW-0597">Phosphoprotein</keyword>
<keyword id="KW-0675">Receptor</keyword>
<keyword id="KW-0765">Sulfation</keyword>
<keyword id="KW-0807">Transducer</keyword>
<keyword id="KW-0812">Transmembrane</keyword>
<keyword id="KW-1133">Transmembrane helix</keyword>
<dbReference type="EMBL" id="AF177884">
    <property type="protein sequence ID" value="AAK43367.1"/>
    <property type="molecule type" value="Genomic_DNA"/>
</dbReference>
<dbReference type="SMR" id="Q95NC5"/>
<dbReference type="GlyCosmos" id="Q95NC5">
    <property type="glycosylation" value="2 sites, No reported glycans"/>
</dbReference>
<dbReference type="GO" id="GO:0005737">
    <property type="term" value="C:cytoplasm"/>
    <property type="evidence" value="ECO:0007669"/>
    <property type="project" value="TreeGrafter"/>
</dbReference>
<dbReference type="GO" id="GO:0009897">
    <property type="term" value="C:external side of plasma membrane"/>
    <property type="evidence" value="ECO:0000250"/>
    <property type="project" value="UniProtKB"/>
</dbReference>
<dbReference type="GO" id="GO:0016493">
    <property type="term" value="F:C-C chemokine receptor activity"/>
    <property type="evidence" value="ECO:0000250"/>
    <property type="project" value="UniProtKB"/>
</dbReference>
<dbReference type="GO" id="GO:0071791">
    <property type="term" value="F:chemokine (C-C motif) ligand 5 binding"/>
    <property type="evidence" value="ECO:0007669"/>
    <property type="project" value="TreeGrafter"/>
</dbReference>
<dbReference type="GO" id="GO:0019722">
    <property type="term" value="P:calcium-mediated signaling"/>
    <property type="evidence" value="ECO:0007669"/>
    <property type="project" value="TreeGrafter"/>
</dbReference>
<dbReference type="GO" id="GO:0060326">
    <property type="term" value="P:cell chemotaxis"/>
    <property type="evidence" value="ECO:0007669"/>
    <property type="project" value="TreeGrafter"/>
</dbReference>
<dbReference type="GO" id="GO:0006955">
    <property type="term" value="P:immune response"/>
    <property type="evidence" value="ECO:0007669"/>
    <property type="project" value="InterPro"/>
</dbReference>
<dbReference type="GO" id="GO:0006954">
    <property type="term" value="P:inflammatory response"/>
    <property type="evidence" value="ECO:0007669"/>
    <property type="project" value="InterPro"/>
</dbReference>
<dbReference type="GO" id="GO:0007204">
    <property type="term" value="P:positive regulation of cytosolic calcium ion concentration"/>
    <property type="evidence" value="ECO:0007669"/>
    <property type="project" value="TreeGrafter"/>
</dbReference>
<dbReference type="CDD" id="cd15184">
    <property type="entry name" value="7tmA_CCR5_CCR2"/>
    <property type="match status" value="1"/>
</dbReference>
<dbReference type="FunFam" id="1.20.1070.10:FF:000026">
    <property type="entry name" value="C-C chemokine receptor type 5"/>
    <property type="match status" value="1"/>
</dbReference>
<dbReference type="Gene3D" id="1.20.1070.10">
    <property type="entry name" value="Rhodopsin 7-helix transmembrane proteins"/>
    <property type="match status" value="1"/>
</dbReference>
<dbReference type="InterPro" id="IPR050119">
    <property type="entry name" value="CCR1-9-like"/>
</dbReference>
<dbReference type="InterPro" id="IPR002240">
    <property type="entry name" value="Chemokine_CCR5"/>
</dbReference>
<dbReference type="InterPro" id="IPR000355">
    <property type="entry name" value="Chemokine_rcpt"/>
</dbReference>
<dbReference type="InterPro" id="IPR000276">
    <property type="entry name" value="GPCR_Rhodpsn"/>
</dbReference>
<dbReference type="InterPro" id="IPR017452">
    <property type="entry name" value="GPCR_Rhodpsn_7TM"/>
</dbReference>
<dbReference type="PANTHER" id="PTHR10489:SF686">
    <property type="entry name" value="C-C CHEMOKINE RECEPTOR TYPE 5"/>
    <property type="match status" value="1"/>
</dbReference>
<dbReference type="PANTHER" id="PTHR10489">
    <property type="entry name" value="CELL ADHESION MOLECULE"/>
    <property type="match status" value="1"/>
</dbReference>
<dbReference type="Pfam" id="PF00001">
    <property type="entry name" value="7tm_1"/>
    <property type="match status" value="1"/>
</dbReference>
<dbReference type="PRINTS" id="PR00657">
    <property type="entry name" value="CCCHEMOKINER"/>
</dbReference>
<dbReference type="PRINTS" id="PR01110">
    <property type="entry name" value="CHEMOKINER5"/>
</dbReference>
<dbReference type="PRINTS" id="PR00237">
    <property type="entry name" value="GPCRRHODOPSN"/>
</dbReference>
<dbReference type="SUPFAM" id="SSF81321">
    <property type="entry name" value="Family A G protein-coupled receptor-like"/>
    <property type="match status" value="1"/>
</dbReference>
<dbReference type="PROSITE" id="PS00237">
    <property type="entry name" value="G_PROTEIN_RECEP_F1_1"/>
    <property type="match status" value="1"/>
</dbReference>
<dbReference type="PROSITE" id="PS50262">
    <property type="entry name" value="G_PROTEIN_RECEP_F1_2"/>
    <property type="match status" value="1"/>
</dbReference>
<organism>
    <name type="scientific">Symphalangus syndactylus</name>
    <name type="common">Siamang</name>
    <name type="synonym">Hylobates syndactylus</name>
    <dbReference type="NCBI Taxonomy" id="9590"/>
    <lineage>
        <taxon>Eukaryota</taxon>
        <taxon>Metazoa</taxon>
        <taxon>Chordata</taxon>
        <taxon>Craniata</taxon>
        <taxon>Vertebrata</taxon>
        <taxon>Euteleostomi</taxon>
        <taxon>Mammalia</taxon>
        <taxon>Eutheria</taxon>
        <taxon>Euarchontoglires</taxon>
        <taxon>Primates</taxon>
        <taxon>Haplorrhini</taxon>
        <taxon>Catarrhini</taxon>
        <taxon>Hylobatidae</taxon>
        <taxon>Symphalangus</taxon>
    </lineage>
</organism>
<gene>
    <name type="primary">CCR5</name>
    <name type="synonym">CMKBR5</name>
</gene>
<protein>
    <recommendedName>
        <fullName>C-C chemokine receptor type 5</fullName>
        <shortName>C-C CKR-5</shortName>
        <shortName>CC-CKR-5</shortName>
        <shortName>CCR-5</shortName>
        <shortName>CCR5</shortName>
    </recommendedName>
    <cdAntigenName>CD195</cdAntigenName>
</protein>